<reference key="1">
    <citation type="submission" date="2006-08" db="EMBL/GenBank/DDBJ databases">
        <title>Complete sequence of chromosome 1 of Shewanella sp. MR-7.</title>
        <authorList>
            <person name="Copeland A."/>
            <person name="Lucas S."/>
            <person name="Lapidus A."/>
            <person name="Barry K."/>
            <person name="Detter J.C."/>
            <person name="Glavina del Rio T."/>
            <person name="Hammon N."/>
            <person name="Israni S."/>
            <person name="Dalin E."/>
            <person name="Tice H."/>
            <person name="Pitluck S."/>
            <person name="Kiss H."/>
            <person name="Brettin T."/>
            <person name="Bruce D."/>
            <person name="Han C."/>
            <person name="Tapia R."/>
            <person name="Gilna P."/>
            <person name="Schmutz J."/>
            <person name="Larimer F."/>
            <person name="Land M."/>
            <person name="Hauser L."/>
            <person name="Kyrpides N."/>
            <person name="Mikhailova N."/>
            <person name="Nealson K."/>
            <person name="Konstantinidis K."/>
            <person name="Klappenbach J."/>
            <person name="Tiedje J."/>
            <person name="Richardson P."/>
        </authorList>
    </citation>
    <scope>NUCLEOTIDE SEQUENCE [LARGE SCALE GENOMIC DNA]</scope>
    <source>
        <strain>MR-7</strain>
    </source>
</reference>
<protein>
    <recommendedName>
        <fullName evidence="1">Holliday junction branch migration complex subunit RuvA</fullName>
    </recommendedName>
</protein>
<gene>
    <name evidence="1" type="primary">ruvA</name>
    <name type="ordered locus">Shewmr7_2077</name>
</gene>
<evidence type="ECO:0000255" key="1">
    <source>
        <dbReference type="HAMAP-Rule" id="MF_00031"/>
    </source>
</evidence>
<feature type="chain" id="PRO_1000002554" description="Holliday junction branch migration complex subunit RuvA">
    <location>
        <begin position="1"/>
        <end position="205"/>
    </location>
</feature>
<feature type="region of interest" description="Domain I" evidence="1">
    <location>
        <begin position="1"/>
        <end position="64"/>
    </location>
</feature>
<feature type="region of interest" description="Domain II" evidence="1">
    <location>
        <begin position="65"/>
        <end position="143"/>
    </location>
</feature>
<feature type="region of interest" description="Flexible linker" evidence="1">
    <location>
        <begin position="144"/>
        <end position="156"/>
    </location>
</feature>
<feature type="region of interest" description="Domain III" evidence="1">
    <location>
        <begin position="157"/>
        <end position="205"/>
    </location>
</feature>
<proteinExistence type="inferred from homology"/>
<organism>
    <name type="scientific">Shewanella sp. (strain MR-7)</name>
    <dbReference type="NCBI Taxonomy" id="60481"/>
    <lineage>
        <taxon>Bacteria</taxon>
        <taxon>Pseudomonadati</taxon>
        <taxon>Pseudomonadota</taxon>
        <taxon>Gammaproteobacteria</taxon>
        <taxon>Alteromonadales</taxon>
        <taxon>Shewanellaceae</taxon>
        <taxon>Shewanella</taxon>
    </lineage>
</organism>
<accession>Q0HUZ0</accession>
<comment type="function">
    <text evidence="1">The RuvA-RuvB-RuvC complex processes Holliday junction (HJ) DNA during genetic recombination and DNA repair, while the RuvA-RuvB complex plays an important role in the rescue of blocked DNA replication forks via replication fork reversal (RFR). RuvA specifically binds to HJ cruciform DNA, conferring on it an open structure. The RuvB hexamer acts as an ATP-dependent pump, pulling dsDNA into and through the RuvAB complex. HJ branch migration allows RuvC to scan DNA until it finds its consensus sequence, where it cleaves and resolves the cruciform DNA.</text>
</comment>
<comment type="subunit">
    <text evidence="1">Homotetramer. Forms an RuvA(8)-RuvB(12)-Holliday junction (HJ) complex. HJ DNA is sandwiched between 2 RuvA tetramers; dsDNA enters through RuvA and exits via RuvB. An RuvB hexamer assembles on each DNA strand where it exits the tetramer. Each RuvB hexamer is contacted by two RuvA subunits (via domain III) on 2 adjacent RuvB subunits; this complex drives branch migration. In the full resolvosome a probable DNA-RuvA(4)-RuvB(12)-RuvC(2) complex forms which resolves the HJ.</text>
</comment>
<comment type="subcellular location">
    <subcellularLocation>
        <location evidence="1">Cytoplasm</location>
    </subcellularLocation>
</comment>
<comment type="domain">
    <text evidence="1">Has three domains with a flexible linker between the domains II and III and assumes an 'L' shape. Domain III is highly mobile and contacts RuvB.</text>
</comment>
<comment type="similarity">
    <text evidence="1">Belongs to the RuvA family.</text>
</comment>
<dbReference type="EMBL" id="CP000444">
    <property type="protein sequence ID" value="ABI43065.1"/>
    <property type="molecule type" value="Genomic_DNA"/>
</dbReference>
<dbReference type="SMR" id="Q0HUZ0"/>
<dbReference type="KEGG" id="shm:Shewmr7_2077"/>
<dbReference type="HOGENOM" id="CLU_087936_0_0_6"/>
<dbReference type="GO" id="GO:0005737">
    <property type="term" value="C:cytoplasm"/>
    <property type="evidence" value="ECO:0007669"/>
    <property type="project" value="UniProtKB-SubCell"/>
</dbReference>
<dbReference type="GO" id="GO:0009379">
    <property type="term" value="C:Holliday junction helicase complex"/>
    <property type="evidence" value="ECO:0007669"/>
    <property type="project" value="InterPro"/>
</dbReference>
<dbReference type="GO" id="GO:0048476">
    <property type="term" value="C:Holliday junction resolvase complex"/>
    <property type="evidence" value="ECO:0007669"/>
    <property type="project" value="UniProtKB-UniRule"/>
</dbReference>
<dbReference type="GO" id="GO:0005524">
    <property type="term" value="F:ATP binding"/>
    <property type="evidence" value="ECO:0007669"/>
    <property type="project" value="InterPro"/>
</dbReference>
<dbReference type="GO" id="GO:0000400">
    <property type="term" value="F:four-way junction DNA binding"/>
    <property type="evidence" value="ECO:0007669"/>
    <property type="project" value="UniProtKB-UniRule"/>
</dbReference>
<dbReference type="GO" id="GO:0009378">
    <property type="term" value="F:four-way junction helicase activity"/>
    <property type="evidence" value="ECO:0007669"/>
    <property type="project" value="InterPro"/>
</dbReference>
<dbReference type="GO" id="GO:0006310">
    <property type="term" value="P:DNA recombination"/>
    <property type="evidence" value="ECO:0007669"/>
    <property type="project" value="UniProtKB-UniRule"/>
</dbReference>
<dbReference type="GO" id="GO:0006281">
    <property type="term" value="P:DNA repair"/>
    <property type="evidence" value="ECO:0007669"/>
    <property type="project" value="UniProtKB-UniRule"/>
</dbReference>
<dbReference type="CDD" id="cd14332">
    <property type="entry name" value="UBA_RuvA_C"/>
    <property type="match status" value="1"/>
</dbReference>
<dbReference type="Gene3D" id="1.10.150.20">
    <property type="entry name" value="5' to 3' exonuclease, C-terminal subdomain"/>
    <property type="match status" value="1"/>
</dbReference>
<dbReference type="Gene3D" id="1.10.8.10">
    <property type="entry name" value="DNA helicase RuvA subunit, C-terminal domain"/>
    <property type="match status" value="1"/>
</dbReference>
<dbReference type="Gene3D" id="2.40.50.140">
    <property type="entry name" value="Nucleic acid-binding proteins"/>
    <property type="match status" value="1"/>
</dbReference>
<dbReference type="HAMAP" id="MF_00031">
    <property type="entry name" value="DNA_HJ_migration_RuvA"/>
    <property type="match status" value="1"/>
</dbReference>
<dbReference type="InterPro" id="IPR013849">
    <property type="entry name" value="DNA_helicase_Holl-junc_RuvA_I"/>
</dbReference>
<dbReference type="InterPro" id="IPR003583">
    <property type="entry name" value="Hlx-hairpin-Hlx_DNA-bd_motif"/>
</dbReference>
<dbReference type="InterPro" id="IPR012340">
    <property type="entry name" value="NA-bd_OB-fold"/>
</dbReference>
<dbReference type="InterPro" id="IPR000085">
    <property type="entry name" value="RuvA"/>
</dbReference>
<dbReference type="InterPro" id="IPR010994">
    <property type="entry name" value="RuvA_2-like"/>
</dbReference>
<dbReference type="InterPro" id="IPR011114">
    <property type="entry name" value="RuvA_C"/>
</dbReference>
<dbReference type="InterPro" id="IPR036267">
    <property type="entry name" value="RuvA_C_sf"/>
</dbReference>
<dbReference type="NCBIfam" id="TIGR00084">
    <property type="entry name" value="ruvA"/>
    <property type="match status" value="1"/>
</dbReference>
<dbReference type="Pfam" id="PF14520">
    <property type="entry name" value="HHH_5"/>
    <property type="match status" value="1"/>
</dbReference>
<dbReference type="Pfam" id="PF07499">
    <property type="entry name" value="RuvA_C"/>
    <property type="match status" value="1"/>
</dbReference>
<dbReference type="Pfam" id="PF01330">
    <property type="entry name" value="RuvA_N"/>
    <property type="match status" value="1"/>
</dbReference>
<dbReference type="SMART" id="SM00278">
    <property type="entry name" value="HhH1"/>
    <property type="match status" value="2"/>
</dbReference>
<dbReference type="SUPFAM" id="SSF46929">
    <property type="entry name" value="DNA helicase RuvA subunit, C-terminal domain"/>
    <property type="match status" value="1"/>
</dbReference>
<dbReference type="SUPFAM" id="SSF50249">
    <property type="entry name" value="Nucleic acid-binding proteins"/>
    <property type="match status" value="1"/>
</dbReference>
<dbReference type="SUPFAM" id="SSF47781">
    <property type="entry name" value="RuvA domain 2-like"/>
    <property type="match status" value="1"/>
</dbReference>
<sequence length="205" mass="22440">MIGRLRGVLIEKQAPEVLIDVNGVGYELQMPLTSFYELPEVNQPTTVYTHFVVREDAQLLYGFITKQERSLFRLLIKANGVGPKLALTILSGMTASEFVGCVERDDIVTLVKLPGVGKKTAERLLVEMRDKLKSLMEASVGSEREFVLQSNYSPAPTVNSAEEDAISALISLGYKPPQASKAVSAAYKEGMDSETLIKAALKSML</sequence>
<keyword id="KW-0963">Cytoplasm</keyword>
<keyword id="KW-0227">DNA damage</keyword>
<keyword id="KW-0233">DNA recombination</keyword>
<keyword id="KW-0234">DNA repair</keyword>
<keyword id="KW-0238">DNA-binding</keyword>
<name>RUVA_SHESR</name>